<reference key="1">
    <citation type="submission" date="2002-12" db="EMBL/GenBank/DDBJ databases">
        <title>Complete genome sequence of Vibrio vulnificus CMCP6.</title>
        <authorList>
            <person name="Rhee J.H."/>
            <person name="Kim S.Y."/>
            <person name="Chung S.S."/>
            <person name="Kim J.J."/>
            <person name="Moon Y.H."/>
            <person name="Jeong H."/>
            <person name="Choy H.E."/>
        </authorList>
    </citation>
    <scope>NUCLEOTIDE SEQUENCE [LARGE SCALE GENOMIC DNA]</scope>
    <source>
        <strain>CMCP6</strain>
    </source>
</reference>
<name>SYD_VIBVU</name>
<proteinExistence type="inferred from homology"/>
<comment type="function">
    <text evidence="1">Catalyzes the attachment of L-aspartate to tRNA(Asp) in a two-step reaction: L-aspartate is first activated by ATP to form Asp-AMP and then transferred to the acceptor end of tRNA(Asp).</text>
</comment>
<comment type="catalytic activity">
    <reaction evidence="1">
        <text>tRNA(Asp) + L-aspartate + ATP = L-aspartyl-tRNA(Asp) + AMP + diphosphate</text>
        <dbReference type="Rhea" id="RHEA:19649"/>
        <dbReference type="Rhea" id="RHEA-COMP:9660"/>
        <dbReference type="Rhea" id="RHEA-COMP:9678"/>
        <dbReference type="ChEBI" id="CHEBI:29991"/>
        <dbReference type="ChEBI" id="CHEBI:30616"/>
        <dbReference type="ChEBI" id="CHEBI:33019"/>
        <dbReference type="ChEBI" id="CHEBI:78442"/>
        <dbReference type="ChEBI" id="CHEBI:78516"/>
        <dbReference type="ChEBI" id="CHEBI:456215"/>
        <dbReference type="EC" id="6.1.1.12"/>
    </reaction>
</comment>
<comment type="subunit">
    <text evidence="1">Homodimer.</text>
</comment>
<comment type="subcellular location">
    <subcellularLocation>
        <location evidence="1">Cytoplasm</location>
    </subcellularLocation>
</comment>
<comment type="similarity">
    <text evidence="1">Belongs to the class-II aminoacyl-tRNA synthetase family. Type 1 subfamily.</text>
</comment>
<evidence type="ECO:0000255" key="1">
    <source>
        <dbReference type="HAMAP-Rule" id="MF_00044"/>
    </source>
</evidence>
<sequence>MRTHYCGHLNKSLAGQTVELCGWVNRRRDLGGLIFIDMRDREGIVQVVVDPDMADAYAVASQLRNEFCIKLTGEVRTRPESQVNKEMATGEVEILAKGLEIINRSDVLPLDFNQKNSEEQRLKYRYLDLRRPEMSDRIKLRAKASSFVRRFLDDNGFLDIETPVLTKATPEGARDYLVPSRVHKGSFYALPQSPQLFKQLLMMSGFDRYYQIVKCFRDEDLRADRQPEFTQIDIETSFMTSDQVRAVTEKMVREMWLELLNVDLGEFPVMPFSEAIRRFGSDKPDLRNPLELVDVADLVKDVDFKVFSGPANDEKGRVAVIRVPGGAELTRKQIDEYTGFVNIYGAKGLAWMKVNDRAAGMEGIQSPVAKFLSEDVINGILERTQAESGDIILFGADKANIVAEALGALRLKLGKDLGLTKEGTWAPLWVVDFPMFEEDDEGNLHAMHHPFTSPLGLTAEELKANPAPAISNAYDMVLNGYEVGGGSVRIHNAEMQAAVFDILGIDADEQKLKFGFLLDALKFGTPPHAGLAFGLDRLVMLLCGTENIRDVIAFPKTTAAACLMTDAPSVANPAALEELAIAVTVAKEKSAE</sequence>
<protein>
    <recommendedName>
        <fullName evidence="1">Aspartate--tRNA ligase</fullName>
        <ecNumber evidence="1">6.1.1.12</ecNumber>
    </recommendedName>
    <alternativeName>
        <fullName evidence="1">Aspartyl-tRNA synthetase</fullName>
        <shortName evidence="1">AspRS</shortName>
    </alternativeName>
</protein>
<organism>
    <name type="scientific">Vibrio vulnificus (strain CMCP6)</name>
    <dbReference type="NCBI Taxonomy" id="216895"/>
    <lineage>
        <taxon>Bacteria</taxon>
        <taxon>Pseudomonadati</taxon>
        <taxon>Pseudomonadota</taxon>
        <taxon>Gammaproteobacteria</taxon>
        <taxon>Vibrionales</taxon>
        <taxon>Vibrionaceae</taxon>
        <taxon>Vibrio</taxon>
    </lineage>
</organism>
<dbReference type="EC" id="6.1.1.12" evidence="1"/>
<dbReference type="EMBL" id="AE016795">
    <property type="protein sequence ID" value="AAO10541.1"/>
    <property type="molecule type" value="Genomic_DNA"/>
</dbReference>
<dbReference type="RefSeq" id="WP_011080035.1">
    <property type="nucleotide sequence ID" value="NC_004459.3"/>
</dbReference>
<dbReference type="SMR" id="Q8DAN7"/>
<dbReference type="KEGG" id="vvu:VV1_2156"/>
<dbReference type="HOGENOM" id="CLU_014330_3_2_6"/>
<dbReference type="Proteomes" id="UP000002275">
    <property type="component" value="Chromosome 1"/>
</dbReference>
<dbReference type="GO" id="GO:0005737">
    <property type="term" value="C:cytoplasm"/>
    <property type="evidence" value="ECO:0007669"/>
    <property type="project" value="UniProtKB-SubCell"/>
</dbReference>
<dbReference type="GO" id="GO:0004815">
    <property type="term" value="F:aspartate-tRNA ligase activity"/>
    <property type="evidence" value="ECO:0007669"/>
    <property type="project" value="UniProtKB-UniRule"/>
</dbReference>
<dbReference type="GO" id="GO:0005524">
    <property type="term" value="F:ATP binding"/>
    <property type="evidence" value="ECO:0007669"/>
    <property type="project" value="UniProtKB-UniRule"/>
</dbReference>
<dbReference type="GO" id="GO:0003676">
    <property type="term" value="F:nucleic acid binding"/>
    <property type="evidence" value="ECO:0007669"/>
    <property type="project" value="InterPro"/>
</dbReference>
<dbReference type="GO" id="GO:0006422">
    <property type="term" value="P:aspartyl-tRNA aminoacylation"/>
    <property type="evidence" value="ECO:0007669"/>
    <property type="project" value="UniProtKB-UniRule"/>
</dbReference>
<dbReference type="CDD" id="cd00777">
    <property type="entry name" value="AspRS_core"/>
    <property type="match status" value="1"/>
</dbReference>
<dbReference type="CDD" id="cd04317">
    <property type="entry name" value="EcAspRS_like_N"/>
    <property type="match status" value="1"/>
</dbReference>
<dbReference type="FunFam" id="2.40.50.140:FF:000080">
    <property type="entry name" value="Aspartate--tRNA ligase"/>
    <property type="match status" value="1"/>
</dbReference>
<dbReference type="Gene3D" id="3.30.930.10">
    <property type="entry name" value="Bira Bifunctional Protein, Domain 2"/>
    <property type="match status" value="1"/>
</dbReference>
<dbReference type="Gene3D" id="3.30.1360.30">
    <property type="entry name" value="GAD-like domain"/>
    <property type="match status" value="1"/>
</dbReference>
<dbReference type="Gene3D" id="2.40.50.140">
    <property type="entry name" value="Nucleic acid-binding proteins"/>
    <property type="match status" value="1"/>
</dbReference>
<dbReference type="HAMAP" id="MF_00044">
    <property type="entry name" value="Asp_tRNA_synth_type1"/>
    <property type="match status" value="1"/>
</dbReference>
<dbReference type="InterPro" id="IPR004364">
    <property type="entry name" value="Aa-tRNA-synt_II"/>
</dbReference>
<dbReference type="InterPro" id="IPR006195">
    <property type="entry name" value="aa-tRNA-synth_II"/>
</dbReference>
<dbReference type="InterPro" id="IPR045864">
    <property type="entry name" value="aa-tRNA-synth_II/BPL/LPL"/>
</dbReference>
<dbReference type="InterPro" id="IPR004524">
    <property type="entry name" value="Asp-tRNA-ligase_1"/>
</dbReference>
<dbReference type="InterPro" id="IPR047089">
    <property type="entry name" value="Asp-tRNA-ligase_1_N"/>
</dbReference>
<dbReference type="InterPro" id="IPR002312">
    <property type="entry name" value="Asp/Asn-tRNA-synth_IIb"/>
</dbReference>
<dbReference type="InterPro" id="IPR047090">
    <property type="entry name" value="AspRS_core"/>
</dbReference>
<dbReference type="InterPro" id="IPR004115">
    <property type="entry name" value="GAD-like_sf"/>
</dbReference>
<dbReference type="InterPro" id="IPR029351">
    <property type="entry name" value="GAD_dom"/>
</dbReference>
<dbReference type="InterPro" id="IPR012340">
    <property type="entry name" value="NA-bd_OB-fold"/>
</dbReference>
<dbReference type="InterPro" id="IPR004365">
    <property type="entry name" value="NA-bd_OB_tRNA"/>
</dbReference>
<dbReference type="NCBIfam" id="TIGR00459">
    <property type="entry name" value="aspS_bact"/>
    <property type="match status" value="1"/>
</dbReference>
<dbReference type="NCBIfam" id="NF001750">
    <property type="entry name" value="PRK00476.1"/>
    <property type="match status" value="1"/>
</dbReference>
<dbReference type="PANTHER" id="PTHR22594:SF5">
    <property type="entry name" value="ASPARTATE--TRNA LIGASE, MITOCHONDRIAL"/>
    <property type="match status" value="1"/>
</dbReference>
<dbReference type="PANTHER" id="PTHR22594">
    <property type="entry name" value="ASPARTYL/LYSYL-TRNA SYNTHETASE"/>
    <property type="match status" value="1"/>
</dbReference>
<dbReference type="Pfam" id="PF02938">
    <property type="entry name" value="GAD"/>
    <property type="match status" value="1"/>
</dbReference>
<dbReference type="Pfam" id="PF00152">
    <property type="entry name" value="tRNA-synt_2"/>
    <property type="match status" value="1"/>
</dbReference>
<dbReference type="Pfam" id="PF01336">
    <property type="entry name" value="tRNA_anti-codon"/>
    <property type="match status" value="1"/>
</dbReference>
<dbReference type="PRINTS" id="PR01042">
    <property type="entry name" value="TRNASYNTHASP"/>
</dbReference>
<dbReference type="SUPFAM" id="SSF55681">
    <property type="entry name" value="Class II aaRS and biotin synthetases"/>
    <property type="match status" value="1"/>
</dbReference>
<dbReference type="SUPFAM" id="SSF55261">
    <property type="entry name" value="GAD domain-like"/>
    <property type="match status" value="1"/>
</dbReference>
<dbReference type="SUPFAM" id="SSF50249">
    <property type="entry name" value="Nucleic acid-binding proteins"/>
    <property type="match status" value="1"/>
</dbReference>
<dbReference type="PROSITE" id="PS50862">
    <property type="entry name" value="AA_TRNA_LIGASE_II"/>
    <property type="match status" value="1"/>
</dbReference>
<accession>Q8DAN7</accession>
<keyword id="KW-0030">Aminoacyl-tRNA synthetase</keyword>
<keyword id="KW-0067">ATP-binding</keyword>
<keyword id="KW-0963">Cytoplasm</keyword>
<keyword id="KW-0436">Ligase</keyword>
<keyword id="KW-0547">Nucleotide-binding</keyword>
<keyword id="KW-0648">Protein biosynthesis</keyword>
<feature type="chain" id="PRO_0000110978" description="Aspartate--tRNA ligase">
    <location>
        <begin position="1"/>
        <end position="592"/>
    </location>
</feature>
<feature type="region of interest" description="Aspartate" evidence="1">
    <location>
        <begin position="195"/>
        <end position="198"/>
    </location>
</feature>
<feature type="binding site" evidence="1">
    <location>
        <position position="171"/>
    </location>
    <ligand>
        <name>L-aspartate</name>
        <dbReference type="ChEBI" id="CHEBI:29991"/>
    </ligand>
</feature>
<feature type="binding site" evidence="1">
    <location>
        <begin position="217"/>
        <end position="219"/>
    </location>
    <ligand>
        <name>ATP</name>
        <dbReference type="ChEBI" id="CHEBI:30616"/>
    </ligand>
</feature>
<feature type="binding site" evidence="1">
    <location>
        <position position="217"/>
    </location>
    <ligand>
        <name>L-aspartate</name>
        <dbReference type="ChEBI" id="CHEBI:29991"/>
    </ligand>
</feature>
<feature type="binding site" evidence="1">
    <location>
        <position position="226"/>
    </location>
    <ligand>
        <name>ATP</name>
        <dbReference type="ChEBI" id="CHEBI:30616"/>
    </ligand>
</feature>
<feature type="binding site" evidence="1">
    <location>
        <position position="448"/>
    </location>
    <ligand>
        <name>L-aspartate</name>
        <dbReference type="ChEBI" id="CHEBI:29991"/>
    </ligand>
</feature>
<feature type="binding site" evidence="1">
    <location>
        <position position="482"/>
    </location>
    <ligand>
        <name>ATP</name>
        <dbReference type="ChEBI" id="CHEBI:30616"/>
    </ligand>
</feature>
<feature type="binding site" evidence="1">
    <location>
        <position position="489"/>
    </location>
    <ligand>
        <name>L-aspartate</name>
        <dbReference type="ChEBI" id="CHEBI:29991"/>
    </ligand>
</feature>
<feature type="binding site" evidence="1">
    <location>
        <begin position="534"/>
        <end position="537"/>
    </location>
    <ligand>
        <name>ATP</name>
        <dbReference type="ChEBI" id="CHEBI:30616"/>
    </ligand>
</feature>
<gene>
    <name evidence="1" type="primary">aspS</name>
    <name type="ordered locus">VV1_2156</name>
</gene>